<feature type="chain" id="PRO_0000323487" description="Bifunctional protein HldE">
    <location>
        <begin position="1"/>
        <end position="476"/>
    </location>
</feature>
<feature type="region of interest" description="Ribokinase">
    <location>
        <begin position="1"/>
        <end position="318"/>
    </location>
</feature>
<feature type="region of interest" description="Cytidylyltransferase">
    <location>
        <begin position="344"/>
        <end position="476"/>
    </location>
</feature>
<feature type="active site" evidence="1">
    <location>
        <position position="264"/>
    </location>
</feature>
<feature type="binding site" evidence="1">
    <location>
        <begin position="195"/>
        <end position="198"/>
    </location>
    <ligand>
        <name>ATP</name>
        <dbReference type="ChEBI" id="CHEBI:30616"/>
    </ligand>
</feature>
<dbReference type="EC" id="2.7.1.167" evidence="1"/>
<dbReference type="EC" id="2.7.7.70" evidence="1"/>
<dbReference type="EMBL" id="CP000653">
    <property type="protein sequence ID" value="ABP62114.1"/>
    <property type="molecule type" value="Genomic_DNA"/>
</dbReference>
<dbReference type="RefSeq" id="WP_015960442.1">
    <property type="nucleotide sequence ID" value="NC_009436.1"/>
</dbReference>
<dbReference type="SMR" id="A4WEI4"/>
<dbReference type="STRING" id="399742.Ent638_3455"/>
<dbReference type="KEGG" id="ent:Ent638_3455"/>
<dbReference type="eggNOG" id="COG0615">
    <property type="taxonomic scope" value="Bacteria"/>
</dbReference>
<dbReference type="eggNOG" id="COG2870">
    <property type="taxonomic scope" value="Bacteria"/>
</dbReference>
<dbReference type="HOGENOM" id="CLU_021150_2_1_6"/>
<dbReference type="OrthoDB" id="9802794at2"/>
<dbReference type="UniPathway" id="UPA00356">
    <property type="reaction ID" value="UER00437"/>
</dbReference>
<dbReference type="UniPathway" id="UPA00356">
    <property type="reaction ID" value="UER00439"/>
</dbReference>
<dbReference type="Proteomes" id="UP000000230">
    <property type="component" value="Chromosome"/>
</dbReference>
<dbReference type="GO" id="GO:0005829">
    <property type="term" value="C:cytosol"/>
    <property type="evidence" value="ECO:0007669"/>
    <property type="project" value="TreeGrafter"/>
</dbReference>
<dbReference type="GO" id="GO:0005524">
    <property type="term" value="F:ATP binding"/>
    <property type="evidence" value="ECO:0007669"/>
    <property type="project" value="UniProtKB-UniRule"/>
</dbReference>
<dbReference type="GO" id="GO:0033785">
    <property type="term" value="F:heptose 7-phosphate kinase activity"/>
    <property type="evidence" value="ECO:0007669"/>
    <property type="project" value="UniProtKB-UniRule"/>
</dbReference>
<dbReference type="GO" id="GO:0033786">
    <property type="term" value="F:heptose-1-phosphate adenylyltransferase activity"/>
    <property type="evidence" value="ECO:0007669"/>
    <property type="project" value="UniProtKB-UniRule"/>
</dbReference>
<dbReference type="GO" id="GO:0016773">
    <property type="term" value="F:phosphotransferase activity, alcohol group as acceptor"/>
    <property type="evidence" value="ECO:0007669"/>
    <property type="project" value="InterPro"/>
</dbReference>
<dbReference type="GO" id="GO:0097171">
    <property type="term" value="P:ADP-L-glycero-beta-D-manno-heptose biosynthetic process"/>
    <property type="evidence" value="ECO:0007669"/>
    <property type="project" value="UniProtKB-UniPathway"/>
</dbReference>
<dbReference type="CDD" id="cd01172">
    <property type="entry name" value="RfaE_like"/>
    <property type="match status" value="1"/>
</dbReference>
<dbReference type="FunFam" id="3.40.1190.20:FF:000002">
    <property type="entry name" value="Bifunctional protein HldE"/>
    <property type="match status" value="1"/>
</dbReference>
<dbReference type="FunFam" id="3.40.50.620:FF:000028">
    <property type="entry name" value="Bifunctional protein HldE"/>
    <property type="match status" value="1"/>
</dbReference>
<dbReference type="Gene3D" id="3.40.1190.20">
    <property type="match status" value="1"/>
</dbReference>
<dbReference type="Gene3D" id="3.40.50.620">
    <property type="entry name" value="HUPs"/>
    <property type="match status" value="1"/>
</dbReference>
<dbReference type="HAMAP" id="MF_01603">
    <property type="entry name" value="HldE"/>
    <property type="match status" value="1"/>
</dbReference>
<dbReference type="InterPro" id="IPR023030">
    <property type="entry name" value="Bifunc_HldE"/>
</dbReference>
<dbReference type="InterPro" id="IPR002173">
    <property type="entry name" value="Carboh/pur_kinase_PfkB_CS"/>
</dbReference>
<dbReference type="InterPro" id="IPR004821">
    <property type="entry name" value="Cyt_trans-like"/>
</dbReference>
<dbReference type="InterPro" id="IPR011611">
    <property type="entry name" value="PfkB_dom"/>
</dbReference>
<dbReference type="InterPro" id="IPR011913">
    <property type="entry name" value="RfaE_dom_I"/>
</dbReference>
<dbReference type="InterPro" id="IPR011914">
    <property type="entry name" value="RfaE_dom_II"/>
</dbReference>
<dbReference type="InterPro" id="IPR029056">
    <property type="entry name" value="Ribokinase-like"/>
</dbReference>
<dbReference type="InterPro" id="IPR014729">
    <property type="entry name" value="Rossmann-like_a/b/a_fold"/>
</dbReference>
<dbReference type="NCBIfam" id="TIGR00125">
    <property type="entry name" value="cyt_tran_rel"/>
    <property type="match status" value="1"/>
</dbReference>
<dbReference type="NCBIfam" id="NF008454">
    <property type="entry name" value="PRK11316.1"/>
    <property type="match status" value="1"/>
</dbReference>
<dbReference type="NCBIfam" id="TIGR02198">
    <property type="entry name" value="rfaE_dom_I"/>
    <property type="match status" value="1"/>
</dbReference>
<dbReference type="NCBIfam" id="TIGR02199">
    <property type="entry name" value="rfaE_dom_II"/>
    <property type="match status" value="1"/>
</dbReference>
<dbReference type="PANTHER" id="PTHR46969">
    <property type="entry name" value="BIFUNCTIONAL PROTEIN HLDE"/>
    <property type="match status" value="1"/>
</dbReference>
<dbReference type="PANTHER" id="PTHR46969:SF1">
    <property type="entry name" value="BIFUNCTIONAL PROTEIN HLDE"/>
    <property type="match status" value="1"/>
</dbReference>
<dbReference type="Pfam" id="PF01467">
    <property type="entry name" value="CTP_transf_like"/>
    <property type="match status" value="1"/>
</dbReference>
<dbReference type="Pfam" id="PF00294">
    <property type="entry name" value="PfkB"/>
    <property type="match status" value="1"/>
</dbReference>
<dbReference type="SUPFAM" id="SSF52374">
    <property type="entry name" value="Nucleotidylyl transferase"/>
    <property type="match status" value="1"/>
</dbReference>
<dbReference type="SUPFAM" id="SSF53613">
    <property type="entry name" value="Ribokinase-like"/>
    <property type="match status" value="1"/>
</dbReference>
<dbReference type="PROSITE" id="PS00583">
    <property type="entry name" value="PFKB_KINASES_1"/>
    <property type="match status" value="1"/>
</dbReference>
<sequence length="476" mass="51071">MKVTLPEFERAGVMVVGDVMLDRYWYGPTSRISPEAPVPVVKVDTIEERPGGAANVAMNIASLGAHSRLVGLTGIDDAARALSKTLADVNVKCDFVSVPTHPTITKLRVLSRNQQLIRLDFEEGFEGVDPEPMHERIAQALGSIGALVLSDYAKGALASVQQMIQLARKAGVPVLIDPKGTEFERYRGATLLTPNLSEFEAVAGKCKNEEEIVERGMKIIADFDFSALLVTRSEQGMTLLQPGKPPLHMPTQAQEVYDVTGAGDTVIGVLAATLAAGNSLEEACYFANAAAGVVVGKLGTSTVSPIELENAVRGRADTGFGVMREDELKVAVAAARKRGEKVVMTNGVFDILHAGHVSYLANARKLGDRLIVAVNSDASTKRLKGETRPVNPLEQRMIVLGALEAVDWVVSFEEDTPQRLIAGILPDLLVKGGDYKPEQIAGSEEVWANGGDVMVLNFEDGCSTTNIIKKIQKDSQ</sequence>
<evidence type="ECO:0000255" key="1">
    <source>
        <dbReference type="HAMAP-Rule" id="MF_01603"/>
    </source>
</evidence>
<accession>A4WEI4</accession>
<gene>
    <name evidence="1" type="primary">hldE</name>
    <name type="ordered locus">Ent638_3455</name>
</gene>
<comment type="function">
    <text evidence="1">Catalyzes the phosphorylation of D-glycero-D-manno-heptose 7-phosphate at the C-1 position to selectively form D-glycero-beta-D-manno-heptose-1,7-bisphosphate.</text>
</comment>
<comment type="function">
    <text evidence="1">Catalyzes the ADP transfer from ATP to D-glycero-beta-D-manno-heptose 1-phosphate, yielding ADP-D-glycero-beta-D-manno-heptose.</text>
</comment>
<comment type="catalytic activity">
    <reaction evidence="1">
        <text>D-glycero-beta-D-manno-heptose 7-phosphate + ATP = D-glycero-beta-D-manno-heptose 1,7-bisphosphate + ADP + H(+)</text>
        <dbReference type="Rhea" id="RHEA:27473"/>
        <dbReference type="ChEBI" id="CHEBI:15378"/>
        <dbReference type="ChEBI" id="CHEBI:30616"/>
        <dbReference type="ChEBI" id="CHEBI:60204"/>
        <dbReference type="ChEBI" id="CHEBI:60208"/>
        <dbReference type="ChEBI" id="CHEBI:456216"/>
        <dbReference type="EC" id="2.7.1.167"/>
    </reaction>
</comment>
<comment type="catalytic activity">
    <reaction evidence="1">
        <text>D-glycero-beta-D-manno-heptose 1-phosphate + ATP + H(+) = ADP-D-glycero-beta-D-manno-heptose + diphosphate</text>
        <dbReference type="Rhea" id="RHEA:27465"/>
        <dbReference type="ChEBI" id="CHEBI:15378"/>
        <dbReference type="ChEBI" id="CHEBI:30616"/>
        <dbReference type="ChEBI" id="CHEBI:33019"/>
        <dbReference type="ChEBI" id="CHEBI:59967"/>
        <dbReference type="ChEBI" id="CHEBI:61593"/>
        <dbReference type="EC" id="2.7.7.70"/>
    </reaction>
</comment>
<comment type="pathway">
    <text evidence="1">Nucleotide-sugar biosynthesis; ADP-L-glycero-beta-D-manno-heptose biosynthesis; ADP-L-glycero-beta-D-manno-heptose from D-glycero-beta-D-manno-heptose 7-phosphate: step 1/4.</text>
</comment>
<comment type="pathway">
    <text evidence="1">Nucleotide-sugar biosynthesis; ADP-L-glycero-beta-D-manno-heptose biosynthesis; ADP-L-glycero-beta-D-manno-heptose from D-glycero-beta-D-manno-heptose 7-phosphate: step 3/4.</text>
</comment>
<comment type="subunit">
    <text evidence="1">Homodimer.</text>
</comment>
<comment type="similarity">
    <text evidence="1">In the N-terminal section; belongs to the carbohydrate kinase PfkB family.</text>
</comment>
<comment type="similarity">
    <text evidence="1">In the C-terminal section; belongs to the cytidylyltransferase family.</text>
</comment>
<proteinExistence type="inferred from homology"/>
<protein>
    <recommendedName>
        <fullName evidence="1">Bifunctional protein HldE</fullName>
    </recommendedName>
    <domain>
        <recommendedName>
            <fullName evidence="1">D-beta-D-heptose 7-phosphate kinase</fullName>
            <ecNumber evidence="1">2.7.1.167</ecNumber>
        </recommendedName>
        <alternativeName>
            <fullName evidence="1">D-beta-D-heptose 7-phosphotransferase</fullName>
        </alternativeName>
        <alternativeName>
            <fullName evidence="1">D-glycero-beta-D-manno-heptose-7-phosphate kinase</fullName>
        </alternativeName>
    </domain>
    <domain>
        <recommendedName>
            <fullName evidence="1">D-beta-D-heptose 1-phosphate adenylyltransferase</fullName>
            <ecNumber evidence="1">2.7.7.70</ecNumber>
        </recommendedName>
        <alternativeName>
            <fullName evidence="1">D-glycero-beta-D-manno-heptose 1-phosphate adenylyltransferase</fullName>
        </alternativeName>
    </domain>
</protein>
<keyword id="KW-0067">ATP-binding</keyword>
<keyword id="KW-0119">Carbohydrate metabolism</keyword>
<keyword id="KW-0418">Kinase</keyword>
<keyword id="KW-0511">Multifunctional enzyme</keyword>
<keyword id="KW-0547">Nucleotide-binding</keyword>
<keyword id="KW-0548">Nucleotidyltransferase</keyword>
<keyword id="KW-0808">Transferase</keyword>
<name>HLDE_ENT38</name>
<reference key="1">
    <citation type="journal article" date="2010" name="PLoS Genet.">
        <title>Genome sequence of the plant growth promoting endophytic bacterium Enterobacter sp. 638.</title>
        <authorList>
            <person name="Taghavi S."/>
            <person name="van der Lelie D."/>
            <person name="Hoffman A."/>
            <person name="Zhang Y.B."/>
            <person name="Walla M.D."/>
            <person name="Vangronsveld J."/>
            <person name="Newman L."/>
            <person name="Monchy S."/>
        </authorList>
    </citation>
    <scope>NUCLEOTIDE SEQUENCE [LARGE SCALE GENOMIC DNA]</scope>
    <source>
        <strain>638</strain>
    </source>
</reference>
<organism>
    <name type="scientific">Enterobacter sp. (strain 638)</name>
    <dbReference type="NCBI Taxonomy" id="399742"/>
    <lineage>
        <taxon>Bacteria</taxon>
        <taxon>Pseudomonadati</taxon>
        <taxon>Pseudomonadota</taxon>
        <taxon>Gammaproteobacteria</taxon>
        <taxon>Enterobacterales</taxon>
        <taxon>Enterobacteriaceae</taxon>
        <taxon>Enterobacter</taxon>
    </lineage>
</organism>